<evidence type="ECO:0000255" key="1">
    <source>
        <dbReference type="HAMAP-Rule" id="MF_01025"/>
    </source>
</evidence>
<gene>
    <name evidence="1" type="primary">leuA</name>
    <name type="ordered locus">VS_0380</name>
</gene>
<protein>
    <recommendedName>
        <fullName evidence="1">2-isopropylmalate synthase</fullName>
        <ecNumber evidence="1">2.3.3.13</ecNumber>
    </recommendedName>
    <alternativeName>
        <fullName evidence="1">Alpha-IPM synthase</fullName>
    </alternativeName>
    <alternativeName>
        <fullName evidence="1">Alpha-isopropylmalate synthase</fullName>
    </alternativeName>
</protein>
<keyword id="KW-0028">Amino-acid biosynthesis</keyword>
<keyword id="KW-0100">Branched-chain amino acid biosynthesis</keyword>
<keyword id="KW-0963">Cytoplasm</keyword>
<keyword id="KW-0432">Leucine biosynthesis</keyword>
<keyword id="KW-0464">Manganese</keyword>
<keyword id="KW-0479">Metal-binding</keyword>
<keyword id="KW-0808">Transferase</keyword>
<organism>
    <name type="scientific">Vibrio atlanticus (strain LGP32)</name>
    <name type="common">Vibrio splendidus (strain Mel32)</name>
    <dbReference type="NCBI Taxonomy" id="575788"/>
    <lineage>
        <taxon>Bacteria</taxon>
        <taxon>Pseudomonadati</taxon>
        <taxon>Pseudomonadota</taxon>
        <taxon>Gammaproteobacteria</taxon>
        <taxon>Vibrionales</taxon>
        <taxon>Vibrionaceae</taxon>
        <taxon>Vibrio</taxon>
    </lineage>
</organism>
<reference key="1">
    <citation type="submission" date="2009-02" db="EMBL/GenBank/DDBJ databases">
        <title>Vibrio splendidus str. LGP32 complete genome.</title>
        <authorList>
            <person name="Mazel D."/>
            <person name="Le Roux F."/>
        </authorList>
    </citation>
    <scope>NUCLEOTIDE SEQUENCE [LARGE SCALE GENOMIC DNA]</scope>
    <source>
        <strain>LGP32</strain>
    </source>
</reference>
<accession>B7VIF2</accession>
<dbReference type="EC" id="2.3.3.13" evidence="1"/>
<dbReference type="EMBL" id="FM954972">
    <property type="protein sequence ID" value="CAV17389.1"/>
    <property type="molecule type" value="Genomic_DNA"/>
</dbReference>
<dbReference type="SMR" id="B7VIF2"/>
<dbReference type="STRING" id="575788.VS_0380"/>
<dbReference type="KEGG" id="vsp:VS_0380"/>
<dbReference type="eggNOG" id="COG0119">
    <property type="taxonomic scope" value="Bacteria"/>
</dbReference>
<dbReference type="HOGENOM" id="CLU_022158_0_1_6"/>
<dbReference type="UniPathway" id="UPA00048">
    <property type="reaction ID" value="UER00070"/>
</dbReference>
<dbReference type="Proteomes" id="UP000009100">
    <property type="component" value="Chromosome 1"/>
</dbReference>
<dbReference type="GO" id="GO:0005829">
    <property type="term" value="C:cytosol"/>
    <property type="evidence" value="ECO:0007669"/>
    <property type="project" value="TreeGrafter"/>
</dbReference>
<dbReference type="GO" id="GO:0003852">
    <property type="term" value="F:2-isopropylmalate synthase activity"/>
    <property type="evidence" value="ECO:0007669"/>
    <property type="project" value="UniProtKB-UniRule"/>
</dbReference>
<dbReference type="GO" id="GO:0003985">
    <property type="term" value="F:acetyl-CoA C-acetyltransferase activity"/>
    <property type="evidence" value="ECO:0007669"/>
    <property type="project" value="UniProtKB-UniRule"/>
</dbReference>
<dbReference type="GO" id="GO:0030145">
    <property type="term" value="F:manganese ion binding"/>
    <property type="evidence" value="ECO:0007669"/>
    <property type="project" value="UniProtKB-UniRule"/>
</dbReference>
<dbReference type="GO" id="GO:0009098">
    <property type="term" value="P:L-leucine biosynthetic process"/>
    <property type="evidence" value="ECO:0007669"/>
    <property type="project" value="UniProtKB-UniRule"/>
</dbReference>
<dbReference type="CDD" id="cd07940">
    <property type="entry name" value="DRE_TIM_IPMS"/>
    <property type="match status" value="1"/>
</dbReference>
<dbReference type="FunFam" id="1.10.238.260:FF:000001">
    <property type="entry name" value="2-isopropylmalate synthase"/>
    <property type="match status" value="1"/>
</dbReference>
<dbReference type="FunFam" id="3.20.20.70:FF:000010">
    <property type="entry name" value="2-isopropylmalate synthase"/>
    <property type="match status" value="1"/>
</dbReference>
<dbReference type="FunFam" id="3.30.160.270:FF:000001">
    <property type="entry name" value="2-isopropylmalate synthase"/>
    <property type="match status" value="1"/>
</dbReference>
<dbReference type="Gene3D" id="1.10.238.260">
    <property type="match status" value="1"/>
</dbReference>
<dbReference type="Gene3D" id="3.30.160.270">
    <property type="match status" value="1"/>
</dbReference>
<dbReference type="Gene3D" id="3.20.20.70">
    <property type="entry name" value="Aldolase class I"/>
    <property type="match status" value="1"/>
</dbReference>
<dbReference type="HAMAP" id="MF_01025">
    <property type="entry name" value="LeuA_type1"/>
    <property type="match status" value="1"/>
</dbReference>
<dbReference type="InterPro" id="IPR050073">
    <property type="entry name" value="2-IPM_HCS-like"/>
</dbReference>
<dbReference type="InterPro" id="IPR013709">
    <property type="entry name" value="2-isopropylmalate_synth_dimer"/>
</dbReference>
<dbReference type="InterPro" id="IPR002034">
    <property type="entry name" value="AIPM/Hcit_synth_CS"/>
</dbReference>
<dbReference type="InterPro" id="IPR013785">
    <property type="entry name" value="Aldolase_TIM"/>
</dbReference>
<dbReference type="InterPro" id="IPR054691">
    <property type="entry name" value="LeuA/HCS_post-cat"/>
</dbReference>
<dbReference type="InterPro" id="IPR036230">
    <property type="entry name" value="LeuA_allosteric_dom_sf"/>
</dbReference>
<dbReference type="InterPro" id="IPR005671">
    <property type="entry name" value="LeuA_bact_synth"/>
</dbReference>
<dbReference type="InterPro" id="IPR000891">
    <property type="entry name" value="PYR_CT"/>
</dbReference>
<dbReference type="NCBIfam" id="TIGR00973">
    <property type="entry name" value="leuA_bact"/>
    <property type="match status" value="1"/>
</dbReference>
<dbReference type="NCBIfam" id="NF002084">
    <property type="entry name" value="PRK00915.1-1"/>
    <property type="match status" value="1"/>
</dbReference>
<dbReference type="NCBIfam" id="NF002086">
    <property type="entry name" value="PRK00915.1-3"/>
    <property type="match status" value="1"/>
</dbReference>
<dbReference type="PANTHER" id="PTHR10277:SF9">
    <property type="entry name" value="2-ISOPROPYLMALATE SYNTHASE 1, CHLOROPLASTIC-RELATED"/>
    <property type="match status" value="1"/>
</dbReference>
<dbReference type="PANTHER" id="PTHR10277">
    <property type="entry name" value="HOMOCITRATE SYNTHASE-RELATED"/>
    <property type="match status" value="1"/>
</dbReference>
<dbReference type="Pfam" id="PF22617">
    <property type="entry name" value="HCS_D2"/>
    <property type="match status" value="1"/>
</dbReference>
<dbReference type="Pfam" id="PF00682">
    <property type="entry name" value="HMGL-like"/>
    <property type="match status" value="1"/>
</dbReference>
<dbReference type="Pfam" id="PF08502">
    <property type="entry name" value="LeuA_dimer"/>
    <property type="match status" value="1"/>
</dbReference>
<dbReference type="SMART" id="SM00917">
    <property type="entry name" value="LeuA_dimer"/>
    <property type="match status" value="1"/>
</dbReference>
<dbReference type="SUPFAM" id="SSF110921">
    <property type="entry name" value="2-isopropylmalate synthase LeuA, allosteric (dimerisation) domain"/>
    <property type="match status" value="1"/>
</dbReference>
<dbReference type="SUPFAM" id="SSF51569">
    <property type="entry name" value="Aldolase"/>
    <property type="match status" value="1"/>
</dbReference>
<dbReference type="PROSITE" id="PS00815">
    <property type="entry name" value="AIPM_HOMOCIT_SYNTH_1"/>
    <property type="match status" value="1"/>
</dbReference>
<dbReference type="PROSITE" id="PS00816">
    <property type="entry name" value="AIPM_HOMOCIT_SYNTH_2"/>
    <property type="match status" value="1"/>
</dbReference>
<dbReference type="PROSITE" id="PS50991">
    <property type="entry name" value="PYR_CT"/>
    <property type="match status" value="1"/>
</dbReference>
<name>LEU1_VIBA3</name>
<proteinExistence type="inferred from homology"/>
<sequence>MNDQVIIFDTTLRDGEQALAASLTVKEKLQIAYALERLGVDVIEAGFPISSPGDFESVQTIAKHIKDSRICALSRAVAKDIDAAAEALKVADQFRIHTFISTSTVHVQDKLRRSYDDVVEMAVKAVKHARNYTDDVEFSCEDAGRTPIDNLCRMVEAAINAGAKTINIPDTVGYTVPNEFGGIIKTLFDRVPNIDQAIISVHCHDDLGMSVANSIAAVQAGARQIEGTINGIGERAGNCSLEEIAMIIKTRQELLGVHTGLDHKEIHRTSKLVSQLCHMPIQDNKAIVGANAFSHSSGIHQDGMLKNKNTYEIMTPESIGLKNKALNLTSRSGRAAVKSHMDAMGYKDNEYNLDSLYEDFLKLADRKGQVFDYDLEALMHFANLRDEDDFYKLNYLSVQSGSVMSTTSIKLQCGDEEKCEAAVGNGPVDALYQCIYRLTGYEIALDKFDLTAKGEGEDGLGQADIIANYKGRKYHGTGVSTDIVEASGQALLHVINSIQRADTIAEMKQQKFATV</sequence>
<comment type="function">
    <text evidence="1">Catalyzes the condensation of the acetyl group of acetyl-CoA with 3-methyl-2-oxobutanoate (2-ketoisovalerate) to form 3-carboxy-3-hydroxy-4-methylpentanoate (2-isopropylmalate).</text>
</comment>
<comment type="catalytic activity">
    <reaction evidence="1">
        <text>3-methyl-2-oxobutanoate + acetyl-CoA + H2O = (2S)-2-isopropylmalate + CoA + H(+)</text>
        <dbReference type="Rhea" id="RHEA:21524"/>
        <dbReference type="ChEBI" id="CHEBI:1178"/>
        <dbReference type="ChEBI" id="CHEBI:11851"/>
        <dbReference type="ChEBI" id="CHEBI:15377"/>
        <dbReference type="ChEBI" id="CHEBI:15378"/>
        <dbReference type="ChEBI" id="CHEBI:57287"/>
        <dbReference type="ChEBI" id="CHEBI:57288"/>
        <dbReference type="EC" id="2.3.3.13"/>
    </reaction>
</comment>
<comment type="cofactor">
    <cofactor evidence="1">
        <name>Mn(2+)</name>
        <dbReference type="ChEBI" id="CHEBI:29035"/>
    </cofactor>
</comment>
<comment type="pathway">
    <text evidence="1">Amino-acid biosynthesis; L-leucine biosynthesis; L-leucine from 3-methyl-2-oxobutanoate: step 1/4.</text>
</comment>
<comment type="subunit">
    <text evidence="1">Homodimer.</text>
</comment>
<comment type="subcellular location">
    <subcellularLocation>
        <location evidence="1">Cytoplasm</location>
    </subcellularLocation>
</comment>
<comment type="similarity">
    <text evidence="1">Belongs to the alpha-IPM synthase/homocitrate synthase family. LeuA type 1 subfamily.</text>
</comment>
<feature type="chain" id="PRO_1000149331" description="2-isopropylmalate synthase">
    <location>
        <begin position="1"/>
        <end position="515"/>
    </location>
</feature>
<feature type="domain" description="Pyruvate carboxyltransferase" evidence="1">
    <location>
        <begin position="5"/>
        <end position="267"/>
    </location>
</feature>
<feature type="region of interest" description="Regulatory domain" evidence="1">
    <location>
        <begin position="392"/>
        <end position="515"/>
    </location>
</feature>
<feature type="binding site" evidence="1">
    <location>
        <position position="14"/>
    </location>
    <ligand>
        <name>Mn(2+)</name>
        <dbReference type="ChEBI" id="CHEBI:29035"/>
    </ligand>
</feature>
<feature type="binding site" evidence="1">
    <location>
        <position position="202"/>
    </location>
    <ligand>
        <name>Mn(2+)</name>
        <dbReference type="ChEBI" id="CHEBI:29035"/>
    </ligand>
</feature>
<feature type="binding site" evidence="1">
    <location>
        <position position="204"/>
    </location>
    <ligand>
        <name>Mn(2+)</name>
        <dbReference type="ChEBI" id="CHEBI:29035"/>
    </ligand>
</feature>
<feature type="binding site" evidence="1">
    <location>
        <position position="238"/>
    </location>
    <ligand>
        <name>Mn(2+)</name>
        <dbReference type="ChEBI" id="CHEBI:29035"/>
    </ligand>
</feature>